<keyword id="KW-0004">4Fe-4S</keyword>
<keyword id="KW-0342">GTP-binding</keyword>
<keyword id="KW-0408">Iron</keyword>
<keyword id="KW-0411">Iron-sulfur</keyword>
<keyword id="KW-0456">Lyase</keyword>
<keyword id="KW-0479">Metal-binding</keyword>
<keyword id="KW-0501">Molybdenum cofactor biosynthesis</keyword>
<keyword id="KW-0547">Nucleotide-binding</keyword>
<keyword id="KW-1185">Reference proteome</keyword>
<keyword id="KW-0949">S-adenosyl-L-methionine</keyword>
<protein>
    <recommendedName>
        <fullName evidence="1">GTP 3',8-cyclase</fullName>
        <ecNumber evidence="1">4.1.99.22</ecNumber>
    </recommendedName>
    <alternativeName>
        <fullName evidence="1">Molybdenum cofactor biosynthesis protein A</fullName>
    </alternativeName>
</protein>
<accession>Q9AC48</accession>
<name>MOAA_CAUVC</name>
<sequence>MTPYDDSPAQAVSTAPRTTGPSLIDGFGRAVTYLRVSVTDRCDLRCVYCMAEHMTFLPKAEVLTLEELDRLASTFVGLGVRKLRLTGGEPLVRKGFIGLVARLSRHLSSGALDELTLTTNGSQLERYASDLARHGVRRINVSLDTLKPALFRALTRGGDVTRVIAGIDAAQAAGMTVKINAVALKHDNAGEIPALIQWAHGRGCDITLIETMPLGEVDQDRTDQFLSLQDVRRDLSSFWTLTDIPDSTGGPARYVHVAETGGRLGLITPLSNHFCDTCNRVRLTCTGTLHTCLGRDDASDLRAEIRRGASDAELVDAIHLAIGAKPKGHDFQIAAAQPAVARHMSTTGG</sequence>
<reference key="1">
    <citation type="journal article" date="2001" name="Proc. Natl. Acad. Sci. U.S.A.">
        <title>Complete genome sequence of Caulobacter crescentus.</title>
        <authorList>
            <person name="Nierman W.C."/>
            <person name="Feldblyum T.V."/>
            <person name="Laub M.T."/>
            <person name="Paulsen I.T."/>
            <person name="Nelson K.E."/>
            <person name="Eisen J.A."/>
            <person name="Heidelberg J.F."/>
            <person name="Alley M.R.K."/>
            <person name="Ohta N."/>
            <person name="Maddock J.R."/>
            <person name="Potocka I."/>
            <person name="Nelson W.C."/>
            <person name="Newton A."/>
            <person name="Stephens C."/>
            <person name="Phadke N.D."/>
            <person name="Ely B."/>
            <person name="DeBoy R.T."/>
            <person name="Dodson R.J."/>
            <person name="Durkin A.S."/>
            <person name="Gwinn M.L."/>
            <person name="Haft D.H."/>
            <person name="Kolonay J.F."/>
            <person name="Smit J."/>
            <person name="Craven M.B."/>
            <person name="Khouri H.M."/>
            <person name="Shetty J."/>
            <person name="Berry K.J."/>
            <person name="Utterback T.R."/>
            <person name="Tran K."/>
            <person name="Wolf A.M."/>
            <person name="Vamathevan J.J."/>
            <person name="Ermolaeva M.D."/>
            <person name="White O."/>
            <person name="Salzberg S.L."/>
            <person name="Venter J.C."/>
            <person name="Shapiro L."/>
            <person name="Fraser C.M."/>
        </authorList>
    </citation>
    <scope>NUCLEOTIDE SEQUENCE [LARGE SCALE GENOMIC DNA]</scope>
    <source>
        <strain>ATCC 19089 / CIP 103742 / CB 15</strain>
    </source>
</reference>
<organism>
    <name type="scientific">Caulobacter vibrioides (strain ATCC 19089 / CIP 103742 / CB 15)</name>
    <name type="common">Caulobacter crescentus</name>
    <dbReference type="NCBI Taxonomy" id="190650"/>
    <lineage>
        <taxon>Bacteria</taxon>
        <taxon>Pseudomonadati</taxon>
        <taxon>Pseudomonadota</taxon>
        <taxon>Alphaproteobacteria</taxon>
        <taxon>Caulobacterales</taxon>
        <taxon>Caulobacteraceae</taxon>
        <taxon>Caulobacter</taxon>
    </lineage>
</organism>
<gene>
    <name evidence="1" type="primary">moaA</name>
    <name type="ordered locus">CC_0018</name>
</gene>
<feature type="chain" id="PRO_0000152953" description="GTP 3',8-cyclase">
    <location>
        <begin position="1"/>
        <end position="349"/>
    </location>
</feature>
<feature type="domain" description="Radical SAM core" evidence="2">
    <location>
        <begin position="26"/>
        <end position="245"/>
    </location>
</feature>
<feature type="binding site" evidence="1">
    <location>
        <position position="35"/>
    </location>
    <ligand>
        <name>GTP</name>
        <dbReference type="ChEBI" id="CHEBI:37565"/>
    </ligand>
</feature>
<feature type="binding site" evidence="1">
    <location>
        <position position="42"/>
    </location>
    <ligand>
        <name>[4Fe-4S] cluster</name>
        <dbReference type="ChEBI" id="CHEBI:49883"/>
        <label>1</label>
        <note>4Fe-4S-S-AdoMet</note>
    </ligand>
</feature>
<feature type="binding site" evidence="1">
    <location>
        <position position="46"/>
    </location>
    <ligand>
        <name>[4Fe-4S] cluster</name>
        <dbReference type="ChEBI" id="CHEBI:49883"/>
        <label>1</label>
        <note>4Fe-4S-S-AdoMet</note>
    </ligand>
</feature>
<feature type="binding site" evidence="1">
    <location>
        <position position="48"/>
    </location>
    <ligand>
        <name>S-adenosyl-L-methionine</name>
        <dbReference type="ChEBI" id="CHEBI:59789"/>
    </ligand>
</feature>
<feature type="binding site" evidence="1">
    <location>
        <position position="49"/>
    </location>
    <ligand>
        <name>[4Fe-4S] cluster</name>
        <dbReference type="ChEBI" id="CHEBI:49883"/>
        <label>1</label>
        <note>4Fe-4S-S-AdoMet</note>
    </ligand>
</feature>
<feature type="binding site" evidence="1">
    <location>
        <position position="84"/>
    </location>
    <ligand>
        <name>GTP</name>
        <dbReference type="ChEBI" id="CHEBI:37565"/>
    </ligand>
</feature>
<feature type="binding site" evidence="1">
    <location>
        <position position="88"/>
    </location>
    <ligand>
        <name>S-adenosyl-L-methionine</name>
        <dbReference type="ChEBI" id="CHEBI:59789"/>
    </ligand>
</feature>
<feature type="binding site" evidence="1">
    <location>
        <position position="118"/>
    </location>
    <ligand>
        <name>GTP</name>
        <dbReference type="ChEBI" id="CHEBI:37565"/>
    </ligand>
</feature>
<feature type="binding site" evidence="1">
    <location>
        <position position="142"/>
    </location>
    <ligand>
        <name>S-adenosyl-L-methionine</name>
        <dbReference type="ChEBI" id="CHEBI:59789"/>
    </ligand>
</feature>
<feature type="binding site" evidence="1">
    <location>
        <position position="178"/>
    </location>
    <ligand>
        <name>GTP</name>
        <dbReference type="ChEBI" id="CHEBI:37565"/>
    </ligand>
</feature>
<feature type="binding site" evidence="1">
    <location>
        <position position="212"/>
    </location>
    <ligand>
        <name>S-adenosyl-L-methionine</name>
        <dbReference type="ChEBI" id="CHEBI:59789"/>
    </ligand>
</feature>
<feature type="binding site" evidence="1">
    <location>
        <position position="275"/>
    </location>
    <ligand>
        <name>[4Fe-4S] cluster</name>
        <dbReference type="ChEBI" id="CHEBI:49883"/>
        <label>2</label>
        <note>4Fe-4S-substrate</note>
    </ligand>
</feature>
<feature type="binding site" evidence="1">
    <location>
        <position position="278"/>
    </location>
    <ligand>
        <name>[4Fe-4S] cluster</name>
        <dbReference type="ChEBI" id="CHEBI:49883"/>
        <label>2</label>
        <note>4Fe-4S-substrate</note>
    </ligand>
</feature>
<feature type="binding site" evidence="1">
    <location>
        <begin position="280"/>
        <end position="282"/>
    </location>
    <ligand>
        <name>GTP</name>
        <dbReference type="ChEBI" id="CHEBI:37565"/>
    </ligand>
</feature>
<feature type="binding site" evidence="1">
    <location>
        <position position="292"/>
    </location>
    <ligand>
        <name>[4Fe-4S] cluster</name>
        <dbReference type="ChEBI" id="CHEBI:49883"/>
        <label>2</label>
        <note>4Fe-4S-substrate</note>
    </ligand>
</feature>
<comment type="function">
    <text evidence="1">Catalyzes the cyclization of GTP to (8S)-3',8-cyclo-7,8-dihydroguanosine 5'-triphosphate.</text>
</comment>
<comment type="catalytic activity">
    <reaction evidence="1">
        <text>GTP + AH2 + S-adenosyl-L-methionine = (8S)-3',8-cyclo-7,8-dihydroguanosine 5'-triphosphate + 5'-deoxyadenosine + L-methionine + A + H(+)</text>
        <dbReference type="Rhea" id="RHEA:49576"/>
        <dbReference type="ChEBI" id="CHEBI:13193"/>
        <dbReference type="ChEBI" id="CHEBI:15378"/>
        <dbReference type="ChEBI" id="CHEBI:17319"/>
        <dbReference type="ChEBI" id="CHEBI:17499"/>
        <dbReference type="ChEBI" id="CHEBI:37565"/>
        <dbReference type="ChEBI" id="CHEBI:57844"/>
        <dbReference type="ChEBI" id="CHEBI:59789"/>
        <dbReference type="ChEBI" id="CHEBI:131766"/>
        <dbReference type="EC" id="4.1.99.22"/>
    </reaction>
</comment>
<comment type="cofactor">
    <cofactor evidence="1">
        <name>[4Fe-4S] cluster</name>
        <dbReference type="ChEBI" id="CHEBI:49883"/>
    </cofactor>
    <text evidence="1">Binds 2 [4Fe-4S] clusters. Binds 1 [4Fe-4S] cluster coordinated with 3 cysteines and an exchangeable S-adenosyl-L-methionine and 1 [4Fe-4S] cluster coordinated with 3 cysteines and the GTP-derived substrate.</text>
</comment>
<comment type="pathway">
    <text evidence="1">Cofactor biosynthesis; molybdopterin biosynthesis.</text>
</comment>
<comment type="subunit">
    <text evidence="1">Monomer and homodimer.</text>
</comment>
<comment type="similarity">
    <text evidence="1">Belongs to the radical SAM superfamily. MoaA family.</text>
</comment>
<dbReference type="EC" id="4.1.99.22" evidence="1"/>
<dbReference type="EMBL" id="AE005673">
    <property type="protein sequence ID" value="AAK22006.1"/>
    <property type="molecule type" value="Genomic_DNA"/>
</dbReference>
<dbReference type="PIR" id="B87251">
    <property type="entry name" value="B87251"/>
</dbReference>
<dbReference type="RefSeq" id="NP_418838.1">
    <property type="nucleotide sequence ID" value="NC_002696.2"/>
</dbReference>
<dbReference type="RefSeq" id="WP_010917908.1">
    <property type="nucleotide sequence ID" value="NC_002696.2"/>
</dbReference>
<dbReference type="SMR" id="Q9AC48"/>
<dbReference type="STRING" id="190650.CC_0018"/>
<dbReference type="EnsemblBacteria" id="AAK22006">
    <property type="protein sequence ID" value="AAK22006"/>
    <property type="gene ID" value="CC_0018"/>
</dbReference>
<dbReference type="KEGG" id="ccr:CC_0018"/>
<dbReference type="PATRIC" id="fig|190650.5.peg.19"/>
<dbReference type="eggNOG" id="COG2896">
    <property type="taxonomic scope" value="Bacteria"/>
</dbReference>
<dbReference type="HOGENOM" id="CLU_009273_0_1_5"/>
<dbReference type="BioCyc" id="CAULO:CC0018-MONOMER"/>
<dbReference type="UniPathway" id="UPA00344"/>
<dbReference type="Proteomes" id="UP000001816">
    <property type="component" value="Chromosome"/>
</dbReference>
<dbReference type="GO" id="GO:0051539">
    <property type="term" value="F:4 iron, 4 sulfur cluster binding"/>
    <property type="evidence" value="ECO:0007669"/>
    <property type="project" value="UniProtKB-UniRule"/>
</dbReference>
<dbReference type="GO" id="GO:0061799">
    <property type="term" value="F:cyclic pyranopterin monophosphate synthase activity"/>
    <property type="evidence" value="ECO:0007669"/>
    <property type="project" value="TreeGrafter"/>
</dbReference>
<dbReference type="GO" id="GO:0061798">
    <property type="term" value="F:GTP 3',8'-cyclase activity"/>
    <property type="evidence" value="ECO:0007669"/>
    <property type="project" value="UniProtKB-UniRule"/>
</dbReference>
<dbReference type="GO" id="GO:0005525">
    <property type="term" value="F:GTP binding"/>
    <property type="evidence" value="ECO:0007669"/>
    <property type="project" value="UniProtKB-UniRule"/>
</dbReference>
<dbReference type="GO" id="GO:0046872">
    <property type="term" value="F:metal ion binding"/>
    <property type="evidence" value="ECO:0007669"/>
    <property type="project" value="UniProtKB-KW"/>
</dbReference>
<dbReference type="GO" id="GO:1904047">
    <property type="term" value="F:S-adenosyl-L-methionine binding"/>
    <property type="evidence" value="ECO:0007669"/>
    <property type="project" value="UniProtKB-UniRule"/>
</dbReference>
<dbReference type="GO" id="GO:0006777">
    <property type="term" value="P:Mo-molybdopterin cofactor biosynthetic process"/>
    <property type="evidence" value="ECO:0007669"/>
    <property type="project" value="UniProtKB-UniRule"/>
</dbReference>
<dbReference type="CDD" id="cd01335">
    <property type="entry name" value="Radical_SAM"/>
    <property type="match status" value="1"/>
</dbReference>
<dbReference type="CDD" id="cd21117">
    <property type="entry name" value="Twitch_MoaA"/>
    <property type="match status" value="1"/>
</dbReference>
<dbReference type="Gene3D" id="3.20.20.70">
    <property type="entry name" value="Aldolase class I"/>
    <property type="match status" value="1"/>
</dbReference>
<dbReference type="HAMAP" id="MF_01225_B">
    <property type="entry name" value="MoaA_B"/>
    <property type="match status" value="1"/>
</dbReference>
<dbReference type="InterPro" id="IPR013785">
    <property type="entry name" value="Aldolase_TIM"/>
</dbReference>
<dbReference type="InterPro" id="IPR006638">
    <property type="entry name" value="Elp3/MiaA/NifB-like_rSAM"/>
</dbReference>
<dbReference type="InterPro" id="IPR013483">
    <property type="entry name" value="MoaA"/>
</dbReference>
<dbReference type="InterPro" id="IPR000385">
    <property type="entry name" value="MoaA_NifB_PqqE_Fe-S-bd_CS"/>
</dbReference>
<dbReference type="InterPro" id="IPR010505">
    <property type="entry name" value="MoaA_twitch"/>
</dbReference>
<dbReference type="InterPro" id="IPR050105">
    <property type="entry name" value="MoCo_biosynth_MoaA/MoaC"/>
</dbReference>
<dbReference type="InterPro" id="IPR007197">
    <property type="entry name" value="rSAM"/>
</dbReference>
<dbReference type="NCBIfam" id="TIGR02666">
    <property type="entry name" value="moaA"/>
    <property type="match status" value="1"/>
</dbReference>
<dbReference type="PANTHER" id="PTHR22960:SF0">
    <property type="entry name" value="MOLYBDENUM COFACTOR BIOSYNTHESIS PROTEIN 1"/>
    <property type="match status" value="1"/>
</dbReference>
<dbReference type="PANTHER" id="PTHR22960">
    <property type="entry name" value="MOLYBDOPTERIN COFACTOR SYNTHESIS PROTEIN A"/>
    <property type="match status" value="1"/>
</dbReference>
<dbReference type="Pfam" id="PF13353">
    <property type="entry name" value="Fer4_12"/>
    <property type="match status" value="1"/>
</dbReference>
<dbReference type="Pfam" id="PF06463">
    <property type="entry name" value="Mob_synth_C"/>
    <property type="match status" value="1"/>
</dbReference>
<dbReference type="Pfam" id="PF04055">
    <property type="entry name" value="Radical_SAM"/>
    <property type="match status" value="1"/>
</dbReference>
<dbReference type="SFLD" id="SFLDG01383">
    <property type="entry name" value="cyclic_pyranopterin_phosphate"/>
    <property type="match status" value="1"/>
</dbReference>
<dbReference type="SFLD" id="SFLDG01072">
    <property type="entry name" value="dehydrogenase_like"/>
    <property type="match status" value="1"/>
</dbReference>
<dbReference type="SMART" id="SM00729">
    <property type="entry name" value="Elp3"/>
    <property type="match status" value="1"/>
</dbReference>
<dbReference type="SUPFAM" id="SSF102114">
    <property type="entry name" value="Radical SAM enzymes"/>
    <property type="match status" value="1"/>
</dbReference>
<dbReference type="PROSITE" id="PS01305">
    <property type="entry name" value="MOAA_NIFB_PQQE"/>
    <property type="match status" value="1"/>
</dbReference>
<dbReference type="PROSITE" id="PS51918">
    <property type="entry name" value="RADICAL_SAM"/>
    <property type="match status" value="1"/>
</dbReference>
<evidence type="ECO:0000255" key="1">
    <source>
        <dbReference type="HAMAP-Rule" id="MF_01225"/>
    </source>
</evidence>
<evidence type="ECO:0000255" key="2">
    <source>
        <dbReference type="PROSITE-ProRule" id="PRU01266"/>
    </source>
</evidence>
<proteinExistence type="inferred from homology"/>